<reference key="1">
    <citation type="journal article" date="2005" name="Science">
        <title>The transcriptional landscape of the mammalian genome.</title>
        <authorList>
            <person name="Carninci P."/>
            <person name="Kasukawa T."/>
            <person name="Katayama S."/>
            <person name="Gough J."/>
            <person name="Frith M.C."/>
            <person name="Maeda N."/>
            <person name="Oyama R."/>
            <person name="Ravasi T."/>
            <person name="Lenhard B."/>
            <person name="Wells C."/>
            <person name="Kodzius R."/>
            <person name="Shimokawa K."/>
            <person name="Bajic V.B."/>
            <person name="Brenner S.E."/>
            <person name="Batalov S."/>
            <person name="Forrest A.R."/>
            <person name="Zavolan M."/>
            <person name="Davis M.J."/>
            <person name="Wilming L.G."/>
            <person name="Aidinis V."/>
            <person name="Allen J.E."/>
            <person name="Ambesi-Impiombato A."/>
            <person name="Apweiler R."/>
            <person name="Aturaliya R.N."/>
            <person name="Bailey T.L."/>
            <person name="Bansal M."/>
            <person name="Baxter L."/>
            <person name="Beisel K.W."/>
            <person name="Bersano T."/>
            <person name="Bono H."/>
            <person name="Chalk A.M."/>
            <person name="Chiu K.P."/>
            <person name="Choudhary V."/>
            <person name="Christoffels A."/>
            <person name="Clutterbuck D.R."/>
            <person name="Crowe M.L."/>
            <person name="Dalla E."/>
            <person name="Dalrymple B.P."/>
            <person name="de Bono B."/>
            <person name="Della Gatta G."/>
            <person name="di Bernardo D."/>
            <person name="Down T."/>
            <person name="Engstrom P."/>
            <person name="Fagiolini M."/>
            <person name="Faulkner G."/>
            <person name="Fletcher C.F."/>
            <person name="Fukushima T."/>
            <person name="Furuno M."/>
            <person name="Futaki S."/>
            <person name="Gariboldi M."/>
            <person name="Georgii-Hemming P."/>
            <person name="Gingeras T.R."/>
            <person name="Gojobori T."/>
            <person name="Green R.E."/>
            <person name="Gustincich S."/>
            <person name="Harbers M."/>
            <person name="Hayashi Y."/>
            <person name="Hensch T.K."/>
            <person name="Hirokawa N."/>
            <person name="Hill D."/>
            <person name="Huminiecki L."/>
            <person name="Iacono M."/>
            <person name="Ikeo K."/>
            <person name="Iwama A."/>
            <person name="Ishikawa T."/>
            <person name="Jakt M."/>
            <person name="Kanapin A."/>
            <person name="Katoh M."/>
            <person name="Kawasawa Y."/>
            <person name="Kelso J."/>
            <person name="Kitamura H."/>
            <person name="Kitano H."/>
            <person name="Kollias G."/>
            <person name="Krishnan S.P."/>
            <person name="Kruger A."/>
            <person name="Kummerfeld S.K."/>
            <person name="Kurochkin I.V."/>
            <person name="Lareau L.F."/>
            <person name="Lazarevic D."/>
            <person name="Lipovich L."/>
            <person name="Liu J."/>
            <person name="Liuni S."/>
            <person name="McWilliam S."/>
            <person name="Madan Babu M."/>
            <person name="Madera M."/>
            <person name="Marchionni L."/>
            <person name="Matsuda H."/>
            <person name="Matsuzawa S."/>
            <person name="Miki H."/>
            <person name="Mignone F."/>
            <person name="Miyake S."/>
            <person name="Morris K."/>
            <person name="Mottagui-Tabar S."/>
            <person name="Mulder N."/>
            <person name="Nakano N."/>
            <person name="Nakauchi H."/>
            <person name="Ng P."/>
            <person name="Nilsson R."/>
            <person name="Nishiguchi S."/>
            <person name="Nishikawa S."/>
            <person name="Nori F."/>
            <person name="Ohara O."/>
            <person name="Okazaki Y."/>
            <person name="Orlando V."/>
            <person name="Pang K.C."/>
            <person name="Pavan W.J."/>
            <person name="Pavesi G."/>
            <person name="Pesole G."/>
            <person name="Petrovsky N."/>
            <person name="Piazza S."/>
            <person name="Reed J."/>
            <person name="Reid J.F."/>
            <person name="Ring B.Z."/>
            <person name="Ringwald M."/>
            <person name="Rost B."/>
            <person name="Ruan Y."/>
            <person name="Salzberg S.L."/>
            <person name="Sandelin A."/>
            <person name="Schneider C."/>
            <person name="Schoenbach C."/>
            <person name="Sekiguchi K."/>
            <person name="Semple C.A."/>
            <person name="Seno S."/>
            <person name="Sessa L."/>
            <person name="Sheng Y."/>
            <person name="Shibata Y."/>
            <person name="Shimada H."/>
            <person name="Shimada K."/>
            <person name="Silva D."/>
            <person name="Sinclair B."/>
            <person name="Sperling S."/>
            <person name="Stupka E."/>
            <person name="Sugiura K."/>
            <person name="Sultana R."/>
            <person name="Takenaka Y."/>
            <person name="Taki K."/>
            <person name="Tammoja K."/>
            <person name="Tan S.L."/>
            <person name="Tang S."/>
            <person name="Taylor M.S."/>
            <person name="Tegner J."/>
            <person name="Teichmann S.A."/>
            <person name="Ueda H.R."/>
            <person name="van Nimwegen E."/>
            <person name="Verardo R."/>
            <person name="Wei C.L."/>
            <person name="Yagi K."/>
            <person name="Yamanishi H."/>
            <person name="Zabarovsky E."/>
            <person name="Zhu S."/>
            <person name="Zimmer A."/>
            <person name="Hide W."/>
            <person name="Bult C."/>
            <person name="Grimmond S.M."/>
            <person name="Teasdale R.D."/>
            <person name="Liu E.T."/>
            <person name="Brusic V."/>
            <person name="Quackenbush J."/>
            <person name="Wahlestedt C."/>
            <person name="Mattick J.S."/>
            <person name="Hume D.A."/>
            <person name="Kai C."/>
            <person name="Sasaki D."/>
            <person name="Tomaru Y."/>
            <person name="Fukuda S."/>
            <person name="Kanamori-Katayama M."/>
            <person name="Suzuki M."/>
            <person name="Aoki J."/>
            <person name="Arakawa T."/>
            <person name="Iida J."/>
            <person name="Imamura K."/>
            <person name="Itoh M."/>
            <person name="Kato T."/>
            <person name="Kawaji H."/>
            <person name="Kawagashira N."/>
            <person name="Kawashima T."/>
            <person name="Kojima M."/>
            <person name="Kondo S."/>
            <person name="Konno H."/>
            <person name="Nakano K."/>
            <person name="Ninomiya N."/>
            <person name="Nishio T."/>
            <person name="Okada M."/>
            <person name="Plessy C."/>
            <person name="Shibata K."/>
            <person name="Shiraki T."/>
            <person name="Suzuki S."/>
            <person name="Tagami M."/>
            <person name="Waki K."/>
            <person name="Watahiki A."/>
            <person name="Okamura-Oho Y."/>
            <person name="Suzuki H."/>
            <person name="Kawai J."/>
            <person name="Hayashizaki Y."/>
        </authorList>
    </citation>
    <scope>NUCLEOTIDE SEQUENCE [LARGE SCALE MRNA]</scope>
    <source>
        <strain>C57BL/6J</strain>
        <tissue>Testis</tissue>
    </source>
</reference>
<reference key="2">
    <citation type="submission" date="2005-07" db="EMBL/GenBank/DDBJ databases">
        <authorList>
            <person name="Mural R.J."/>
            <person name="Adams M.D."/>
            <person name="Myers E.W."/>
            <person name="Smith H.O."/>
            <person name="Venter J.C."/>
        </authorList>
    </citation>
    <scope>NUCLEOTIDE SEQUENCE [LARGE SCALE GENOMIC DNA]</scope>
</reference>
<reference key="3">
    <citation type="journal article" date="2004" name="Genome Res.">
        <title>The status, quality, and expansion of the NIH full-length cDNA project: the Mammalian Gene Collection (MGC).</title>
        <authorList>
            <consortium name="The MGC Project Team"/>
        </authorList>
    </citation>
    <scope>NUCLEOTIDE SEQUENCE [LARGE SCALE MRNA]</scope>
    <source>
        <tissue>Brain</tissue>
        <tissue>Testis</tissue>
    </source>
</reference>
<reference key="4">
    <citation type="journal article" date="2010" name="Cell">
        <title>A tissue-specific atlas of mouse protein phosphorylation and expression.</title>
        <authorList>
            <person name="Huttlin E.L."/>
            <person name="Jedrychowski M.P."/>
            <person name="Elias J.E."/>
            <person name="Goswami T."/>
            <person name="Rad R."/>
            <person name="Beausoleil S.A."/>
            <person name="Villen J."/>
            <person name="Haas W."/>
            <person name="Sowa M.E."/>
            <person name="Gygi S.P."/>
        </authorList>
    </citation>
    <scope>IDENTIFICATION BY MASS SPECTROMETRY [LARGE SCALE ANALYSIS]</scope>
    <source>
        <tissue>Testis</tissue>
    </source>
</reference>
<reference evidence="11" key="5">
    <citation type="journal article" date="2023" name="Cell">
        <title>Structures of sperm flagellar doublet microtubules expand the genetic spectrum of male infertility.</title>
        <authorList>
            <person name="Zhou L."/>
            <person name="Liu H."/>
            <person name="Liu S."/>
            <person name="Yang X."/>
            <person name="Dong Y."/>
            <person name="Pan Y."/>
            <person name="Xiao Z."/>
            <person name="Zheng B."/>
            <person name="Sun Y."/>
            <person name="Huang P."/>
            <person name="Zhang X."/>
            <person name="Hu J."/>
            <person name="Sun R."/>
            <person name="Feng S."/>
            <person name="Zhu Y."/>
            <person name="Liu M."/>
            <person name="Gui M."/>
            <person name="Wu J."/>
        </authorList>
    </citation>
    <scope>STRUCTURE BY ELECTRON MICROSCOPY (3.50 ANGSTROMS) OF SPERM FLAGELLAR DOUBLET MICROTUBULES</scope>
    <scope>FUNCTION</scope>
    <scope>SUBCELLULAR LOCATION</scope>
    <scope>SUBUNIT</scope>
</reference>
<reference evidence="12" key="6">
    <citation type="journal article" date="2023" name="Cell">
        <title>De novo protein identification in mammalian sperm using in situ cryoelectron tomography and AlphaFold2 docking.</title>
        <authorList>
            <person name="Chen Z."/>
            <person name="Shiozaki M."/>
            <person name="Haas K.M."/>
            <person name="Skinner W.M."/>
            <person name="Zhao S."/>
            <person name="Guo C."/>
            <person name="Polacco B.J."/>
            <person name="Yu Z."/>
            <person name="Krogan N.J."/>
            <person name="Lishko P.V."/>
            <person name="Kaake R.M."/>
            <person name="Vale R.D."/>
            <person name="Agard D.A."/>
        </authorList>
    </citation>
    <scope>STRUCTURE BY ELECTRON MICROSCOPY (7.70 ANGSTROMS) OF SPERM FLAGELLAR DOUBLET MICROTUBULES</scope>
    <scope>FUNCTION</scope>
    <scope>SUBCELLULAR LOCATION</scope>
    <scope>SUBUNIT</scope>
</reference>
<reference evidence="10" key="7">
    <citation type="journal article" date="2023" name="Cell Discov.">
        <title>In-cell structural insight into the stability of sperm microtubule doublet.</title>
        <authorList>
            <person name="Tai L."/>
            <person name="Yin G."/>
            <person name="Huang X."/>
            <person name="Sun F."/>
            <person name="Zhu Y."/>
        </authorList>
    </citation>
    <scope>STRUCTURE BY ELECTRON MICROSCOPY (4.50 ANGSTROMS)</scope>
    <scope>FUNCTION</scope>
    <scope>SUBUNIT</scope>
    <scope>SUBCELLULAR LOCATION</scope>
</reference>
<accession>Q8CDU5</accession>
<accession>A2RSG9</accession>
<organism>
    <name type="scientific">Mus musculus</name>
    <name type="common">Mouse</name>
    <dbReference type="NCBI Taxonomy" id="10090"/>
    <lineage>
        <taxon>Eukaryota</taxon>
        <taxon>Metazoa</taxon>
        <taxon>Chordata</taxon>
        <taxon>Craniata</taxon>
        <taxon>Vertebrata</taxon>
        <taxon>Euteleostomi</taxon>
        <taxon>Mammalia</taxon>
        <taxon>Eutheria</taxon>
        <taxon>Euarchontoglires</taxon>
        <taxon>Glires</taxon>
        <taxon>Rodentia</taxon>
        <taxon>Myomorpha</taxon>
        <taxon>Muroidea</taxon>
        <taxon>Muridae</taxon>
        <taxon>Murinae</taxon>
        <taxon>Mus</taxon>
        <taxon>Mus</taxon>
    </lineage>
</organism>
<keyword id="KW-0002">3D-structure</keyword>
<keyword id="KW-0106">Calcium</keyword>
<keyword id="KW-0966">Cell projection</keyword>
<keyword id="KW-0969">Cilium</keyword>
<keyword id="KW-0963">Cytoplasm</keyword>
<keyword id="KW-0206">Cytoskeleton</keyword>
<keyword id="KW-0282">Flagellum</keyword>
<keyword id="KW-0479">Metal-binding</keyword>
<keyword id="KW-1185">Reference proteome</keyword>
<keyword id="KW-0677">Repeat</keyword>
<protein>
    <recommendedName>
        <fullName evidence="8">EF-hand domain-containing family member B</fullName>
    </recommendedName>
    <alternativeName>
        <fullName>Cilia- and flagella-associated protein 21</fullName>
    </alternativeName>
</protein>
<evidence type="ECO:0000250" key="1">
    <source>
        <dbReference type="UniProtKB" id="F1MMV1"/>
    </source>
</evidence>
<evidence type="ECO:0000250" key="2">
    <source>
        <dbReference type="UniProtKB" id="Q8N7U6"/>
    </source>
</evidence>
<evidence type="ECO:0000255" key="3">
    <source>
        <dbReference type="PROSITE-ProRule" id="PRU00448"/>
    </source>
</evidence>
<evidence type="ECO:0000256" key="4">
    <source>
        <dbReference type="SAM" id="MobiDB-lite"/>
    </source>
</evidence>
<evidence type="ECO:0000269" key="5">
    <source>
    </source>
</evidence>
<evidence type="ECO:0000269" key="6">
    <source>
    </source>
</evidence>
<evidence type="ECO:0000269" key="7">
    <source>
    </source>
</evidence>
<evidence type="ECO:0000305" key="8"/>
<evidence type="ECO:0000312" key="9">
    <source>
        <dbReference type="MGI" id="MGI:3045296"/>
    </source>
</evidence>
<evidence type="ECO:0007744" key="10">
    <source>
        <dbReference type="PDB" id="8I7R"/>
    </source>
</evidence>
<evidence type="ECO:0007744" key="11">
    <source>
        <dbReference type="PDB" id="8IYJ"/>
    </source>
</evidence>
<evidence type="ECO:0007744" key="12">
    <source>
        <dbReference type="PDB" id="8TO0"/>
    </source>
</evidence>
<name>EFHB_MOUSE</name>
<gene>
    <name evidence="9" type="primary">Efhb</name>
    <name type="synonym">Cfap21</name>
</gene>
<proteinExistence type="evidence at protein level"/>
<sequence>MCSFVRVGSPKPLQTSASPLEMSSLRRTRAPEISELGLTPEQKDDIRDRVLRGSKSPTELGFDLRLEQDRKWRERMGSSEAKSPPCHALGVGLERHTISGTPTEMGNLGLHKGSAFQGSKPLGVLPGRVGPENKGLPPRLRYGGTLHPPFSTVHASPLAAESRRRPLAWGSAWTDAVVEKQPVVGLELRKEPEKEPTCVVMNPYPEMPPKEVDIGLPQTQESDEAKNTEPLIGLVREPSECPFAQQPEEKKEPGSTEPGVEPPGNIRPIYSGKFFDRVPCWPSAGKVKPVGYRVATCLTEKLPRLMTPPEAKKYFNFRYPPAGAERVFYGRANDPQIAPYLTHGLRSKISIPMGSLINPQPITTFQQKIKDKKESIYFSHQRAPLGKSHDQTPGLPKGMDVINTTLGTPTIRELSVRDTVNPSKSFEDVLKEGQEGHDLYTVSHNDYFAGEAKNRKYNPASFHRFNLYGIPTPHFNDGRTMAKALHWLHELQMERGAKIVSKRVDDFKEKFQHKLGKVLDPIAETMNVPPGHTFGSCLHPEEYGAGDLIHYRSPDEYLRGKDHQRAVVAAARHHLKKFNHQNFDTLQVAFRHYDKKGDGVIDRAELHEACVQANLHLDKMLLDHLFDYCDVDQDGLINYLEFANFLNWKDRIPLKEHEKRVVVKGKKPDCENVTDTSMGEAEPSLLINPEDIVPKEPGSSEETLRTIQRPGDKVSHQYKTTSSEINAVVGAVPSMCHPIFGVPTIRSDISAPRIRRVSDMNNYGDEGNAYSLLHPSIFSQKGVFERDFFKTRSKEEISDILTNIGVKLSKEEFENVWNLASKKHQRGEVCVETIRNVLDELLHADLVKCKTAM</sequence>
<feature type="chain" id="PRO_0000252095" description="EF-hand domain-containing family member B">
    <location>
        <begin position="1"/>
        <end position="853"/>
    </location>
</feature>
<feature type="domain" description="EF-hand 1" evidence="3">
    <location>
        <begin position="581"/>
        <end position="616"/>
    </location>
</feature>
<feature type="domain" description="EF-hand 2" evidence="3">
    <location>
        <begin position="617"/>
        <end position="652"/>
    </location>
</feature>
<feature type="region of interest" description="Disordered" evidence="4">
    <location>
        <begin position="1"/>
        <end position="31"/>
    </location>
</feature>
<feature type="region of interest" description="Disordered" evidence="4">
    <location>
        <begin position="244"/>
        <end position="266"/>
    </location>
</feature>
<feature type="binding site" evidence="8">
    <location>
        <position position="594"/>
    </location>
    <ligand>
        <name>Ca(2+)</name>
        <dbReference type="ChEBI" id="CHEBI:29108"/>
        <label>1</label>
    </ligand>
</feature>
<feature type="binding site" evidence="8">
    <location>
        <position position="598"/>
    </location>
    <ligand>
        <name>Ca(2+)</name>
        <dbReference type="ChEBI" id="CHEBI:29108"/>
        <label>1</label>
    </ligand>
</feature>
<feature type="binding site" evidence="8">
    <location>
        <position position="605"/>
    </location>
    <ligand>
        <name>Ca(2+)</name>
        <dbReference type="ChEBI" id="CHEBI:29108"/>
        <label>1</label>
    </ligand>
</feature>
<feature type="binding site" evidence="3">
    <location>
        <position position="630"/>
    </location>
    <ligand>
        <name>Ca(2+)</name>
        <dbReference type="ChEBI" id="CHEBI:29108"/>
        <label>2</label>
    </ligand>
</feature>
<feature type="binding site" evidence="3">
    <location>
        <position position="632"/>
    </location>
    <ligand>
        <name>Ca(2+)</name>
        <dbReference type="ChEBI" id="CHEBI:29108"/>
        <label>2</label>
    </ligand>
</feature>
<feature type="binding site" evidence="3">
    <location>
        <position position="634"/>
    </location>
    <ligand>
        <name>Ca(2+)</name>
        <dbReference type="ChEBI" id="CHEBI:29108"/>
        <label>2</label>
    </ligand>
</feature>
<feature type="binding site" evidence="3">
    <location>
        <position position="641"/>
    </location>
    <ligand>
        <name>Ca(2+)</name>
        <dbReference type="ChEBI" id="CHEBI:29108"/>
        <label>2</label>
    </ligand>
</feature>
<feature type="sequence conflict" description="In Ref. 1; BAC26511." evidence="8" ref="1">
    <original>D</original>
    <variation>G</variation>
    <location>
        <position position="632"/>
    </location>
</feature>
<comment type="function">
    <text evidence="2 5 6 7">Microtubule inner protein (MIP) part of the dynein-decorated doublet microtubules (DMTs) in cilia axoneme, which is required for motile cilia beating (PubMed:37295417, PubMed:37865089, PubMed:37989994). Cytosolic sensor for calcium, modulates the interaction of STIM1 and ORAI1 upon store depletion and the activation of store-operated Ca(2+) entry (SOCE) and NFAT translocation from cytosol to nucleus (By similarity).</text>
</comment>
<comment type="subunit">
    <text evidence="2 5 6 7">Microtubule inner protein component of sperm flagellar doublet microtubules (PubMed:37295417, PubMed:37865089, PubMed:37989994). Interacts with STIM1 and ORAI1; the interactions take place upon Ca(2+)-store depletion and dissociate through a Ca(2+)-dependent mechanism. Interaction with STIM1 inhibits STIM1 interaction with SARAF (By similarity).</text>
</comment>
<comment type="subcellular location">
    <subcellularLocation>
        <location evidence="1">Cytoplasm</location>
        <location evidence="1">Cytoskeleton</location>
        <location evidence="1">Cilium axoneme</location>
    </subcellularLocation>
    <subcellularLocation>
        <location evidence="5 6 7">Cytoplasm</location>
        <location evidence="5 6 7">Cytoskeleton</location>
        <location evidence="5 6 7">Flagellum axoneme</location>
    </subcellularLocation>
    <subcellularLocation>
        <location evidence="2">Cytoplasm</location>
    </subcellularLocation>
</comment>
<dbReference type="EMBL" id="AK029550">
    <property type="protein sequence ID" value="BAC26511.1"/>
    <property type="molecule type" value="mRNA"/>
</dbReference>
<dbReference type="EMBL" id="CH466559">
    <property type="protein sequence ID" value="EDL23660.1"/>
    <property type="molecule type" value="Genomic_DNA"/>
</dbReference>
<dbReference type="EMBL" id="BC132103">
    <property type="protein sequence ID" value="AAI32104.1"/>
    <property type="molecule type" value="mRNA"/>
</dbReference>
<dbReference type="EMBL" id="BC137880">
    <property type="protein sequence ID" value="AAI37881.1"/>
    <property type="molecule type" value="mRNA"/>
</dbReference>
<dbReference type="CCDS" id="CCDS37652.1"/>
<dbReference type="RefSeq" id="NP_766085.2">
    <property type="nucleotide sequence ID" value="NM_172497.3"/>
</dbReference>
<dbReference type="PDB" id="8I7R">
    <property type="method" value="EM"/>
    <property type="resolution" value="6.50 A"/>
    <property type="chains" value="E/F=1-853"/>
</dbReference>
<dbReference type="PDB" id="8IYJ">
    <property type="method" value="EM"/>
    <property type="resolution" value="3.50 A"/>
    <property type="chains" value="1/2=1-853"/>
</dbReference>
<dbReference type="PDB" id="8TO0">
    <property type="method" value="EM"/>
    <property type="resolution" value="7.70 A"/>
    <property type="chains" value="1/2=1-853"/>
</dbReference>
<dbReference type="PDBsum" id="8I7R"/>
<dbReference type="PDBsum" id="8IYJ"/>
<dbReference type="PDBsum" id="8TO0"/>
<dbReference type="EMDB" id="EMD-35230"/>
<dbReference type="EMDB" id="EMD-35823"/>
<dbReference type="EMDB" id="EMD-41431"/>
<dbReference type="SMR" id="Q8CDU5"/>
<dbReference type="FunCoup" id="Q8CDU5">
    <property type="interactions" value="1"/>
</dbReference>
<dbReference type="STRING" id="10090.ENSMUSP00000024725"/>
<dbReference type="iPTMnet" id="Q8CDU5"/>
<dbReference type="PhosphoSitePlus" id="Q8CDU5"/>
<dbReference type="PaxDb" id="10090-ENSMUSP00000024725"/>
<dbReference type="ProteomicsDB" id="275439"/>
<dbReference type="Antibodypedia" id="27043">
    <property type="antibodies" value="102 antibodies from 16 providers"/>
</dbReference>
<dbReference type="DNASU" id="211482"/>
<dbReference type="Ensembl" id="ENSMUST00000024725.5">
    <property type="protein sequence ID" value="ENSMUSP00000024725.5"/>
    <property type="gene ID" value="ENSMUSG00000023931.6"/>
</dbReference>
<dbReference type="GeneID" id="211482"/>
<dbReference type="KEGG" id="mmu:211482"/>
<dbReference type="UCSC" id="uc008czl.1">
    <property type="organism name" value="mouse"/>
</dbReference>
<dbReference type="AGR" id="MGI:3045296"/>
<dbReference type="CTD" id="151651"/>
<dbReference type="MGI" id="MGI:3045296">
    <property type="gene designation" value="Efhb"/>
</dbReference>
<dbReference type="VEuPathDB" id="HostDB:ENSMUSG00000023931"/>
<dbReference type="eggNOG" id="ENOG502QV2M">
    <property type="taxonomic scope" value="Eukaryota"/>
</dbReference>
<dbReference type="GeneTree" id="ENSGT00530000063528"/>
<dbReference type="HOGENOM" id="CLU_017580_0_0_1"/>
<dbReference type="InParanoid" id="Q8CDU5"/>
<dbReference type="OMA" id="DCIRPIY"/>
<dbReference type="OrthoDB" id="2096280at2759"/>
<dbReference type="PhylomeDB" id="Q8CDU5"/>
<dbReference type="TreeFam" id="TF323832"/>
<dbReference type="BioGRID-ORCS" id="211482">
    <property type="hits" value="0 hits in 76 CRISPR screens"/>
</dbReference>
<dbReference type="ChiTaRS" id="Efhb">
    <property type="organism name" value="mouse"/>
</dbReference>
<dbReference type="PRO" id="PR:Q8CDU5"/>
<dbReference type="Proteomes" id="UP000000589">
    <property type="component" value="Chromosome 17"/>
</dbReference>
<dbReference type="RNAct" id="Q8CDU5">
    <property type="molecule type" value="protein"/>
</dbReference>
<dbReference type="Bgee" id="ENSMUSG00000023931">
    <property type="expression patterns" value="Expressed in spermatid and 57 other cell types or tissues"/>
</dbReference>
<dbReference type="ExpressionAtlas" id="Q8CDU5">
    <property type="expression patterns" value="baseline and differential"/>
</dbReference>
<dbReference type="GO" id="GO:0160111">
    <property type="term" value="C:axonemal A tubule inner sheath"/>
    <property type="evidence" value="ECO:0000314"/>
    <property type="project" value="UniProtKB"/>
</dbReference>
<dbReference type="GO" id="GO:0005879">
    <property type="term" value="C:axonemal microtubule"/>
    <property type="evidence" value="ECO:0000250"/>
    <property type="project" value="UniProtKB"/>
</dbReference>
<dbReference type="GO" id="GO:0036126">
    <property type="term" value="C:sperm flagellum"/>
    <property type="evidence" value="ECO:0000314"/>
    <property type="project" value="UniProtKB"/>
</dbReference>
<dbReference type="GO" id="GO:0005509">
    <property type="term" value="F:calcium ion binding"/>
    <property type="evidence" value="ECO:0007669"/>
    <property type="project" value="InterPro"/>
</dbReference>
<dbReference type="GO" id="GO:0061891">
    <property type="term" value="F:calcium ion sensor activity"/>
    <property type="evidence" value="ECO:0000250"/>
    <property type="project" value="UniProtKB"/>
</dbReference>
<dbReference type="GO" id="GO:0030317">
    <property type="term" value="P:flagellated sperm motility"/>
    <property type="evidence" value="ECO:0000314"/>
    <property type="project" value="UniProtKB"/>
</dbReference>
<dbReference type="GO" id="GO:0032091">
    <property type="term" value="P:negative regulation of protein binding"/>
    <property type="evidence" value="ECO:0000250"/>
    <property type="project" value="UniProtKB"/>
</dbReference>
<dbReference type="GO" id="GO:0070884">
    <property type="term" value="P:regulation of calcineurin-NFAT signaling cascade"/>
    <property type="evidence" value="ECO:0000250"/>
    <property type="project" value="UniProtKB"/>
</dbReference>
<dbReference type="GO" id="GO:2001256">
    <property type="term" value="P:regulation of store-operated calcium entry"/>
    <property type="evidence" value="ECO:0000250"/>
    <property type="project" value="UniProtKB"/>
</dbReference>
<dbReference type="CDD" id="cd00051">
    <property type="entry name" value="EFh"/>
    <property type="match status" value="1"/>
</dbReference>
<dbReference type="FunFam" id="1.10.238.10:FF:000693">
    <property type="entry name" value="EF-hand domain-containing family member B"/>
    <property type="match status" value="1"/>
</dbReference>
<dbReference type="Gene3D" id="1.10.238.10">
    <property type="entry name" value="EF-hand"/>
    <property type="match status" value="1"/>
</dbReference>
<dbReference type="InterPro" id="IPR011992">
    <property type="entry name" value="EF-hand-dom_pair"/>
</dbReference>
<dbReference type="InterPro" id="IPR018247">
    <property type="entry name" value="EF_Hand_1_Ca_BS"/>
</dbReference>
<dbReference type="InterPro" id="IPR002048">
    <property type="entry name" value="EF_hand_dom"/>
</dbReference>
<dbReference type="InterPro" id="IPR040193">
    <property type="entry name" value="EFHC1/EFHC2/EFHB"/>
</dbReference>
<dbReference type="PANTHER" id="PTHR12086">
    <property type="entry name" value="EF-HAND DOMAIN C-TERMINAL CONTAINING PROTEIN"/>
    <property type="match status" value="1"/>
</dbReference>
<dbReference type="PANTHER" id="PTHR12086:SF12">
    <property type="entry name" value="EF-HAND DOMAIN-CONTAINING FAMILY MEMBER B"/>
    <property type="match status" value="1"/>
</dbReference>
<dbReference type="Pfam" id="PF13499">
    <property type="entry name" value="EF-hand_7"/>
    <property type="match status" value="1"/>
</dbReference>
<dbReference type="Pfam" id="PF25325">
    <property type="entry name" value="EF-hand_EFHB_C"/>
    <property type="match status" value="1"/>
</dbReference>
<dbReference type="SMART" id="SM00054">
    <property type="entry name" value="EFh"/>
    <property type="match status" value="2"/>
</dbReference>
<dbReference type="SUPFAM" id="SSF47473">
    <property type="entry name" value="EF-hand"/>
    <property type="match status" value="1"/>
</dbReference>
<dbReference type="PROSITE" id="PS00018">
    <property type="entry name" value="EF_HAND_1"/>
    <property type="match status" value="1"/>
</dbReference>
<dbReference type="PROSITE" id="PS50222">
    <property type="entry name" value="EF_HAND_2"/>
    <property type="match status" value="2"/>
</dbReference>